<accession>Q13BT8</accession>
<evidence type="ECO:0000255" key="1">
    <source>
        <dbReference type="HAMAP-Rule" id="MF_00061"/>
    </source>
</evidence>
<comment type="function">
    <text evidence="1">Catalyzes the phosphorylation of the position 2 hydroxy group of 4-diphosphocytidyl-2C-methyl-D-erythritol.</text>
</comment>
<comment type="catalytic activity">
    <reaction evidence="1">
        <text>4-CDP-2-C-methyl-D-erythritol + ATP = 4-CDP-2-C-methyl-D-erythritol 2-phosphate + ADP + H(+)</text>
        <dbReference type="Rhea" id="RHEA:18437"/>
        <dbReference type="ChEBI" id="CHEBI:15378"/>
        <dbReference type="ChEBI" id="CHEBI:30616"/>
        <dbReference type="ChEBI" id="CHEBI:57823"/>
        <dbReference type="ChEBI" id="CHEBI:57919"/>
        <dbReference type="ChEBI" id="CHEBI:456216"/>
        <dbReference type="EC" id="2.7.1.148"/>
    </reaction>
</comment>
<comment type="pathway">
    <text evidence="1">Isoprenoid biosynthesis; isopentenyl diphosphate biosynthesis via DXP pathway; isopentenyl diphosphate from 1-deoxy-D-xylulose 5-phosphate: step 3/6.</text>
</comment>
<comment type="similarity">
    <text evidence="1">Belongs to the GHMP kinase family. IspE subfamily.</text>
</comment>
<sequence length="294" mass="30315">MTALSEQARAKVNLTLRVVGRRVDGYHDLESVVAFADCADRLTLHPGAELSLVMSGPGAQDCGDTSDNLVLKATRLLAERVPNLRTGGFVLDKHLPVAAGIGGGSADAAAALRLLARANELSADDPRVVEAARLTGADVPVCLPSKPCVMTGVGENLSPLQLPRLPAVMVNPRVPVATKDVFAALGLRAGQLNVGVVDLLKSTGWPTDGSSAADWIAAVKRGTNDLEAPALKVESVVGDVLRALAALPGVRLSRMSGSGATCFALFANDDDAQAGAQLLKAAQPGWWVHAGALS</sequence>
<reference key="1">
    <citation type="submission" date="2006-03" db="EMBL/GenBank/DDBJ databases">
        <title>Complete sequence of Rhodopseudomonas palustris BisB5.</title>
        <authorList>
            <consortium name="US DOE Joint Genome Institute"/>
            <person name="Copeland A."/>
            <person name="Lucas S."/>
            <person name="Lapidus A."/>
            <person name="Barry K."/>
            <person name="Detter J.C."/>
            <person name="Glavina del Rio T."/>
            <person name="Hammon N."/>
            <person name="Israni S."/>
            <person name="Dalin E."/>
            <person name="Tice H."/>
            <person name="Pitluck S."/>
            <person name="Chain P."/>
            <person name="Malfatti S."/>
            <person name="Shin M."/>
            <person name="Vergez L."/>
            <person name="Schmutz J."/>
            <person name="Larimer F."/>
            <person name="Land M."/>
            <person name="Hauser L."/>
            <person name="Pelletier D.A."/>
            <person name="Kyrpides N."/>
            <person name="Lykidis A."/>
            <person name="Oda Y."/>
            <person name="Harwood C.S."/>
            <person name="Richardson P."/>
        </authorList>
    </citation>
    <scope>NUCLEOTIDE SEQUENCE [LARGE SCALE GENOMIC DNA]</scope>
    <source>
        <strain>BisB5</strain>
    </source>
</reference>
<gene>
    <name evidence="1" type="primary">ispE</name>
    <name type="ordered locus">RPD_1213</name>
</gene>
<feature type="chain" id="PRO_0000335748" description="4-diphosphocytidyl-2-C-methyl-D-erythritol kinase">
    <location>
        <begin position="1"/>
        <end position="294"/>
    </location>
</feature>
<feature type="active site" evidence="1">
    <location>
        <position position="11"/>
    </location>
</feature>
<feature type="active site" evidence="1">
    <location>
        <position position="138"/>
    </location>
</feature>
<feature type="binding site" evidence="1">
    <location>
        <begin position="96"/>
        <end position="106"/>
    </location>
    <ligand>
        <name>ATP</name>
        <dbReference type="ChEBI" id="CHEBI:30616"/>
    </ligand>
</feature>
<name>ISPE_RHOPS</name>
<proteinExistence type="inferred from homology"/>
<dbReference type="EC" id="2.7.1.148" evidence="1"/>
<dbReference type="EMBL" id="CP000283">
    <property type="protein sequence ID" value="ABE38451.1"/>
    <property type="molecule type" value="Genomic_DNA"/>
</dbReference>
<dbReference type="SMR" id="Q13BT8"/>
<dbReference type="STRING" id="316057.RPD_1213"/>
<dbReference type="KEGG" id="rpd:RPD_1213"/>
<dbReference type="eggNOG" id="COG1947">
    <property type="taxonomic scope" value="Bacteria"/>
</dbReference>
<dbReference type="HOGENOM" id="CLU_053057_1_0_5"/>
<dbReference type="UniPathway" id="UPA00056">
    <property type="reaction ID" value="UER00094"/>
</dbReference>
<dbReference type="Proteomes" id="UP000001818">
    <property type="component" value="Chromosome"/>
</dbReference>
<dbReference type="GO" id="GO:0050515">
    <property type="term" value="F:4-(cytidine 5'-diphospho)-2-C-methyl-D-erythritol kinase activity"/>
    <property type="evidence" value="ECO:0007669"/>
    <property type="project" value="UniProtKB-UniRule"/>
</dbReference>
<dbReference type="GO" id="GO:0005524">
    <property type="term" value="F:ATP binding"/>
    <property type="evidence" value="ECO:0007669"/>
    <property type="project" value="UniProtKB-UniRule"/>
</dbReference>
<dbReference type="GO" id="GO:0019288">
    <property type="term" value="P:isopentenyl diphosphate biosynthetic process, methylerythritol 4-phosphate pathway"/>
    <property type="evidence" value="ECO:0007669"/>
    <property type="project" value="UniProtKB-UniRule"/>
</dbReference>
<dbReference type="GO" id="GO:0016114">
    <property type="term" value="P:terpenoid biosynthetic process"/>
    <property type="evidence" value="ECO:0007669"/>
    <property type="project" value="InterPro"/>
</dbReference>
<dbReference type="Gene3D" id="3.30.230.10">
    <property type="match status" value="1"/>
</dbReference>
<dbReference type="Gene3D" id="3.30.70.890">
    <property type="entry name" value="GHMP kinase, C-terminal domain"/>
    <property type="match status" value="1"/>
</dbReference>
<dbReference type="HAMAP" id="MF_00061">
    <property type="entry name" value="IspE"/>
    <property type="match status" value="1"/>
</dbReference>
<dbReference type="InterPro" id="IPR013750">
    <property type="entry name" value="GHMP_kinase_C_dom"/>
</dbReference>
<dbReference type="InterPro" id="IPR036554">
    <property type="entry name" value="GHMP_kinase_C_sf"/>
</dbReference>
<dbReference type="InterPro" id="IPR006204">
    <property type="entry name" value="GHMP_kinase_N_dom"/>
</dbReference>
<dbReference type="InterPro" id="IPR004424">
    <property type="entry name" value="IspE"/>
</dbReference>
<dbReference type="InterPro" id="IPR020568">
    <property type="entry name" value="Ribosomal_Su5_D2-typ_SF"/>
</dbReference>
<dbReference type="InterPro" id="IPR014721">
    <property type="entry name" value="Ribsml_uS5_D2-typ_fold_subgr"/>
</dbReference>
<dbReference type="NCBIfam" id="TIGR00154">
    <property type="entry name" value="ispE"/>
    <property type="match status" value="1"/>
</dbReference>
<dbReference type="NCBIfam" id="NF011202">
    <property type="entry name" value="PRK14608.1"/>
    <property type="match status" value="1"/>
</dbReference>
<dbReference type="PANTHER" id="PTHR43527">
    <property type="entry name" value="4-DIPHOSPHOCYTIDYL-2-C-METHYL-D-ERYTHRITOL KINASE, CHLOROPLASTIC"/>
    <property type="match status" value="1"/>
</dbReference>
<dbReference type="PANTHER" id="PTHR43527:SF2">
    <property type="entry name" value="4-DIPHOSPHOCYTIDYL-2-C-METHYL-D-ERYTHRITOL KINASE, CHLOROPLASTIC"/>
    <property type="match status" value="1"/>
</dbReference>
<dbReference type="Pfam" id="PF08544">
    <property type="entry name" value="GHMP_kinases_C"/>
    <property type="match status" value="1"/>
</dbReference>
<dbReference type="Pfam" id="PF00288">
    <property type="entry name" value="GHMP_kinases_N"/>
    <property type="match status" value="1"/>
</dbReference>
<dbReference type="PIRSF" id="PIRSF010376">
    <property type="entry name" value="IspE"/>
    <property type="match status" value="1"/>
</dbReference>
<dbReference type="SUPFAM" id="SSF55060">
    <property type="entry name" value="GHMP Kinase, C-terminal domain"/>
    <property type="match status" value="1"/>
</dbReference>
<dbReference type="SUPFAM" id="SSF54211">
    <property type="entry name" value="Ribosomal protein S5 domain 2-like"/>
    <property type="match status" value="1"/>
</dbReference>
<organism>
    <name type="scientific">Rhodopseudomonas palustris (strain BisB5)</name>
    <dbReference type="NCBI Taxonomy" id="316057"/>
    <lineage>
        <taxon>Bacteria</taxon>
        <taxon>Pseudomonadati</taxon>
        <taxon>Pseudomonadota</taxon>
        <taxon>Alphaproteobacteria</taxon>
        <taxon>Hyphomicrobiales</taxon>
        <taxon>Nitrobacteraceae</taxon>
        <taxon>Rhodopseudomonas</taxon>
    </lineage>
</organism>
<keyword id="KW-0067">ATP-binding</keyword>
<keyword id="KW-0414">Isoprene biosynthesis</keyword>
<keyword id="KW-0418">Kinase</keyword>
<keyword id="KW-0547">Nucleotide-binding</keyword>
<keyword id="KW-0808">Transferase</keyword>
<protein>
    <recommendedName>
        <fullName evidence="1">4-diphosphocytidyl-2-C-methyl-D-erythritol kinase</fullName>
        <shortName evidence="1">CMK</shortName>
        <ecNumber evidence="1">2.7.1.148</ecNumber>
    </recommendedName>
    <alternativeName>
        <fullName evidence="1">4-(cytidine-5'-diphospho)-2-C-methyl-D-erythritol kinase</fullName>
    </alternativeName>
</protein>